<sequence length="160" mass="18230">MSKSSRGGRQIVASNRKARHNYSIIEVFEAGVALQGTEVKSLREGQASLADSFATIDDGEVWLRNAHIPEYRHGSWTNHEPRRNRKLLLHRRQIDTLVGKIREGNFALVPLSLYFAEGKVKVELALARGKQARDKRQDMARRDAQREVLRELGRRAKGMT</sequence>
<reference key="1">
    <citation type="journal article" date="2002" name="J. Bacteriol.">
        <title>Whole-genome comparison of Mycobacterium tuberculosis clinical and laboratory strains.</title>
        <authorList>
            <person name="Fleischmann R.D."/>
            <person name="Alland D."/>
            <person name="Eisen J.A."/>
            <person name="Carpenter L."/>
            <person name="White O."/>
            <person name="Peterson J.D."/>
            <person name="DeBoy R.T."/>
            <person name="Dodson R.J."/>
            <person name="Gwinn M.L."/>
            <person name="Haft D.H."/>
            <person name="Hickey E.K."/>
            <person name="Kolonay J.F."/>
            <person name="Nelson W.C."/>
            <person name="Umayam L.A."/>
            <person name="Ermolaeva M.D."/>
            <person name="Salzberg S.L."/>
            <person name="Delcher A."/>
            <person name="Utterback T.R."/>
            <person name="Weidman J.F."/>
            <person name="Khouri H.M."/>
            <person name="Gill J."/>
            <person name="Mikula A."/>
            <person name="Bishai W."/>
            <person name="Jacobs W.R. Jr."/>
            <person name="Venter J.C."/>
            <person name="Fraser C.M."/>
        </authorList>
    </citation>
    <scope>NUCLEOTIDE SEQUENCE [LARGE SCALE GENOMIC DNA]</scope>
    <source>
        <strain>CDC 1551 / Oshkosh</strain>
    </source>
</reference>
<organism>
    <name type="scientific">Mycobacterium tuberculosis (strain CDC 1551 / Oshkosh)</name>
    <dbReference type="NCBI Taxonomy" id="83331"/>
    <lineage>
        <taxon>Bacteria</taxon>
        <taxon>Bacillati</taxon>
        <taxon>Actinomycetota</taxon>
        <taxon>Actinomycetes</taxon>
        <taxon>Mycobacteriales</taxon>
        <taxon>Mycobacteriaceae</taxon>
        <taxon>Mycobacterium</taxon>
        <taxon>Mycobacterium tuberculosis complex</taxon>
    </lineage>
</organism>
<comment type="function">
    <text evidence="1">Required for rescue of stalled ribosomes mediated by trans-translation. Binds to transfer-messenger RNA (tmRNA), required for stable association of tmRNA with ribosomes. tmRNA and SmpB together mimic tRNA shape, replacing the anticodon stem-loop with SmpB. tmRNA is encoded by the ssrA gene; the 2 termini fold to resemble tRNA(Ala) and it encodes a 'tag peptide', a short internal open reading frame. During trans-translation Ala-aminoacylated tmRNA acts like a tRNA, entering the A-site of stalled ribosomes, displacing the stalled mRNA. The ribosome then switches to translate the ORF on the tmRNA; the nascent peptide is terminated with the 'tag peptide' encoded by the tmRNA and targeted for degradation. The ribosome is freed to recommence translation, which seems to be the essential function of trans-translation.</text>
</comment>
<comment type="subcellular location">
    <subcellularLocation>
        <location evidence="1">Cytoplasm</location>
    </subcellularLocation>
    <text evidence="1">The tmRNA-SmpB complex associates with stalled 70S ribosomes.</text>
</comment>
<comment type="similarity">
    <text evidence="1">Belongs to the SmpB family.</text>
</comment>
<protein>
    <recommendedName>
        <fullName evidence="1">SsrA-binding protein</fullName>
    </recommendedName>
    <alternativeName>
        <fullName evidence="1">Small protein B</fullName>
    </alternativeName>
</protein>
<accession>P9WGD2</accession>
<accession>L0TD60</accession>
<accession>O05778</accession>
<accession>P0A612</accession>
<accession>P96294</accession>
<name>SSRP_MYCTO</name>
<dbReference type="EMBL" id="AE000516">
    <property type="protein sequence ID" value="AAK47522.1"/>
    <property type="molecule type" value="Genomic_DNA"/>
</dbReference>
<dbReference type="PIR" id="C70919">
    <property type="entry name" value="C70919"/>
</dbReference>
<dbReference type="RefSeq" id="WP_003416113.1">
    <property type="nucleotide sequence ID" value="NZ_KK341227.1"/>
</dbReference>
<dbReference type="SMR" id="P9WGD2"/>
<dbReference type="GeneID" id="45427099"/>
<dbReference type="KEGG" id="mtc:MT3184"/>
<dbReference type="PATRIC" id="fig|83331.31.peg.3433"/>
<dbReference type="HOGENOM" id="CLU_108953_2_1_11"/>
<dbReference type="Proteomes" id="UP000001020">
    <property type="component" value="Chromosome"/>
</dbReference>
<dbReference type="GO" id="GO:0005829">
    <property type="term" value="C:cytosol"/>
    <property type="evidence" value="ECO:0007669"/>
    <property type="project" value="TreeGrafter"/>
</dbReference>
<dbReference type="GO" id="GO:0003723">
    <property type="term" value="F:RNA binding"/>
    <property type="evidence" value="ECO:0007669"/>
    <property type="project" value="UniProtKB-UniRule"/>
</dbReference>
<dbReference type="GO" id="GO:0070929">
    <property type="term" value="P:trans-translation"/>
    <property type="evidence" value="ECO:0007669"/>
    <property type="project" value="UniProtKB-UniRule"/>
</dbReference>
<dbReference type="CDD" id="cd09294">
    <property type="entry name" value="SmpB"/>
    <property type="match status" value="1"/>
</dbReference>
<dbReference type="Gene3D" id="2.40.280.10">
    <property type="match status" value="1"/>
</dbReference>
<dbReference type="HAMAP" id="MF_00023">
    <property type="entry name" value="SmpB"/>
    <property type="match status" value="1"/>
</dbReference>
<dbReference type="InterPro" id="IPR023620">
    <property type="entry name" value="SmpB"/>
</dbReference>
<dbReference type="InterPro" id="IPR000037">
    <property type="entry name" value="SsrA-bd_prot"/>
</dbReference>
<dbReference type="InterPro" id="IPR020081">
    <property type="entry name" value="SsrA-bd_prot_CS"/>
</dbReference>
<dbReference type="NCBIfam" id="NF003843">
    <property type="entry name" value="PRK05422.1"/>
    <property type="match status" value="1"/>
</dbReference>
<dbReference type="NCBIfam" id="TIGR00086">
    <property type="entry name" value="smpB"/>
    <property type="match status" value="1"/>
</dbReference>
<dbReference type="PANTHER" id="PTHR30308:SF2">
    <property type="entry name" value="SSRA-BINDING PROTEIN"/>
    <property type="match status" value="1"/>
</dbReference>
<dbReference type="PANTHER" id="PTHR30308">
    <property type="entry name" value="TMRNA-BINDING COMPONENT OF TRANS-TRANSLATION TAGGING COMPLEX"/>
    <property type="match status" value="1"/>
</dbReference>
<dbReference type="Pfam" id="PF01668">
    <property type="entry name" value="SmpB"/>
    <property type="match status" value="1"/>
</dbReference>
<dbReference type="SUPFAM" id="SSF74982">
    <property type="entry name" value="Small protein B (SmpB)"/>
    <property type="match status" value="1"/>
</dbReference>
<dbReference type="PROSITE" id="PS01317">
    <property type="entry name" value="SSRP"/>
    <property type="match status" value="1"/>
</dbReference>
<keyword id="KW-0963">Cytoplasm</keyword>
<keyword id="KW-1185">Reference proteome</keyword>
<keyword id="KW-0694">RNA-binding</keyword>
<proteinExistence type="inferred from homology"/>
<feature type="chain" id="PRO_0000428382" description="SsrA-binding protein">
    <location>
        <begin position="1"/>
        <end position="160"/>
    </location>
</feature>
<evidence type="ECO:0000255" key="1">
    <source>
        <dbReference type="HAMAP-Rule" id="MF_00023"/>
    </source>
</evidence>
<gene>
    <name evidence="1" type="primary">smpB</name>
    <name type="ordered locus">MT3184</name>
</gene>